<proteinExistence type="evidence at protein level"/>
<dbReference type="EMBL" id="CU329670">
    <property type="protein sequence ID" value="CAA91173.1"/>
    <property type="molecule type" value="Genomic_DNA"/>
</dbReference>
<dbReference type="PIR" id="T38574">
    <property type="entry name" value="S62463"/>
</dbReference>
<dbReference type="RefSeq" id="NP_593088.1">
    <property type="nucleotide sequence ID" value="NM_001018486.2"/>
</dbReference>
<dbReference type="PDB" id="4RG5">
    <property type="method" value="X-ray"/>
    <property type="resolution" value="1.70 A"/>
    <property type="chains" value="A/B=119-150"/>
</dbReference>
<dbReference type="PDB" id="7BB3">
    <property type="method" value="X-ray"/>
    <property type="resolution" value="2.16 A"/>
    <property type="chains" value="A/B=2-152"/>
</dbReference>
<dbReference type="PDBsum" id="4RG5"/>
<dbReference type="PDBsum" id="7BB3"/>
<dbReference type="SASBDB" id="Q09808"/>
<dbReference type="SMR" id="Q09808"/>
<dbReference type="BioGRID" id="278486">
    <property type="interactions" value="17"/>
</dbReference>
<dbReference type="ComplexPortal" id="CPX-25739">
    <property type="entry name" value="Survival motor neuron complex"/>
</dbReference>
<dbReference type="FunCoup" id="Q09808">
    <property type="interactions" value="276"/>
</dbReference>
<dbReference type="STRING" id="284812.Q09808"/>
<dbReference type="iPTMnet" id="Q09808"/>
<dbReference type="PaxDb" id="4896-SPAC2G11.08c.1"/>
<dbReference type="EnsemblFungi" id="SPAC2G11.08c.1">
    <property type="protein sequence ID" value="SPAC2G11.08c.1:pep"/>
    <property type="gene ID" value="SPAC2G11.08c"/>
</dbReference>
<dbReference type="GeneID" id="2542002"/>
<dbReference type="KEGG" id="spo:2542002"/>
<dbReference type="PomBase" id="SPAC2G11.08c">
    <property type="gene designation" value="smn1"/>
</dbReference>
<dbReference type="VEuPathDB" id="FungiDB:SPAC2G11.08c"/>
<dbReference type="eggNOG" id="KOG4327">
    <property type="taxonomic scope" value="Eukaryota"/>
</dbReference>
<dbReference type="HOGENOM" id="CLU_093937_1_0_1"/>
<dbReference type="InParanoid" id="Q09808"/>
<dbReference type="OMA" id="MMSWYFA"/>
<dbReference type="PhylomeDB" id="Q09808"/>
<dbReference type="EvolutionaryTrace" id="Q09808"/>
<dbReference type="PRO" id="PR:Q09808"/>
<dbReference type="Proteomes" id="UP000002485">
    <property type="component" value="Chromosome I"/>
</dbReference>
<dbReference type="GO" id="GO:0005634">
    <property type="term" value="C:nucleus"/>
    <property type="evidence" value="ECO:0000314"/>
    <property type="project" value="PomBase"/>
</dbReference>
<dbReference type="GO" id="GO:0032797">
    <property type="term" value="C:SMN complex"/>
    <property type="evidence" value="ECO:0000314"/>
    <property type="project" value="PomBase"/>
</dbReference>
<dbReference type="GO" id="GO:0003723">
    <property type="term" value="F:RNA binding"/>
    <property type="evidence" value="ECO:0007669"/>
    <property type="project" value="UniProtKB-KW"/>
</dbReference>
<dbReference type="GO" id="GO:0045292">
    <property type="term" value="P:mRNA cis splicing, via spliceosome"/>
    <property type="evidence" value="ECO:0000315"/>
    <property type="project" value="PomBase"/>
</dbReference>
<dbReference type="GO" id="GO:0000387">
    <property type="term" value="P:spliceosomal snRNP assembly"/>
    <property type="evidence" value="ECO:0000266"/>
    <property type="project" value="PomBase"/>
</dbReference>
<dbReference type="CDD" id="cd22852">
    <property type="entry name" value="SMN_C"/>
    <property type="match status" value="1"/>
</dbReference>
<dbReference type="CDD" id="cd22851">
    <property type="entry name" value="SMN_N"/>
    <property type="match status" value="1"/>
</dbReference>
<dbReference type="InterPro" id="IPR040424">
    <property type="entry name" value="Smn1"/>
</dbReference>
<dbReference type="InterPro" id="IPR047313">
    <property type="entry name" value="SMN_C"/>
</dbReference>
<dbReference type="PANTHER" id="PTHR39267:SF1">
    <property type="entry name" value="SURVIVAL MOTOR NEURON PROTEIN"/>
    <property type="match status" value="1"/>
</dbReference>
<dbReference type="PANTHER" id="PTHR39267">
    <property type="entry name" value="SURVIVAL MOTOR NEURON-LIKE PROTEIN 1"/>
    <property type="match status" value="1"/>
</dbReference>
<reference key="1">
    <citation type="journal article" date="2002" name="Nature">
        <title>The genome sequence of Schizosaccharomyces pombe.</title>
        <authorList>
            <person name="Wood V."/>
            <person name="Gwilliam R."/>
            <person name="Rajandream M.A."/>
            <person name="Lyne M.H."/>
            <person name="Lyne R."/>
            <person name="Stewart A."/>
            <person name="Sgouros J.G."/>
            <person name="Peat N."/>
            <person name="Hayles J."/>
            <person name="Baker S.G."/>
            <person name="Basham D."/>
            <person name="Bowman S."/>
            <person name="Brooks K."/>
            <person name="Brown D."/>
            <person name="Brown S."/>
            <person name="Chillingworth T."/>
            <person name="Churcher C.M."/>
            <person name="Collins M."/>
            <person name="Connor R."/>
            <person name="Cronin A."/>
            <person name="Davis P."/>
            <person name="Feltwell T."/>
            <person name="Fraser A."/>
            <person name="Gentles S."/>
            <person name="Goble A."/>
            <person name="Hamlin N."/>
            <person name="Harris D.E."/>
            <person name="Hidalgo J."/>
            <person name="Hodgson G."/>
            <person name="Holroyd S."/>
            <person name="Hornsby T."/>
            <person name="Howarth S."/>
            <person name="Huckle E.J."/>
            <person name="Hunt S."/>
            <person name="Jagels K."/>
            <person name="James K.D."/>
            <person name="Jones L."/>
            <person name="Jones M."/>
            <person name="Leather S."/>
            <person name="McDonald S."/>
            <person name="McLean J."/>
            <person name="Mooney P."/>
            <person name="Moule S."/>
            <person name="Mungall K.L."/>
            <person name="Murphy L.D."/>
            <person name="Niblett D."/>
            <person name="Odell C."/>
            <person name="Oliver K."/>
            <person name="O'Neil S."/>
            <person name="Pearson D."/>
            <person name="Quail M.A."/>
            <person name="Rabbinowitsch E."/>
            <person name="Rutherford K.M."/>
            <person name="Rutter S."/>
            <person name="Saunders D."/>
            <person name="Seeger K."/>
            <person name="Sharp S."/>
            <person name="Skelton J."/>
            <person name="Simmonds M.N."/>
            <person name="Squares R."/>
            <person name="Squares S."/>
            <person name="Stevens K."/>
            <person name="Taylor K."/>
            <person name="Taylor R.G."/>
            <person name="Tivey A."/>
            <person name="Walsh S.V."/>
            <person name="Warren T."/>
            <person name="Whitehead S."/>
            <person name="Woodward J.R."/>
            <person name="Volckaert G."/>
            <person name="Aert R."/>
            <person name="Robben J."/>
            <person name="Grymonprez B."/>
            <person name="Weltjens I."/>
            <person name="Vanstreels E."/>
            <person name="Rieger M."/>
            <person name="Schaefer M."/>
            <person name="Mueller-Auer S."/>
            <person name="Gabel C."/>
            <person name="Fuchs M."/>
            <person name="Duesterhoeft A."/>
            <person name="Fritzc C."/>
            <person name="Holzer E."/>
            <person name="Moestl D."/>
            <person name="Hilbert H."/>
            <person name="Borzym K."/>
            <person name="Langer I."/>
            <person name="Beck A."/>
            <person name="Lehrach H."/>
            <person name="Reinhardt R."/>
            <person name="Pohl T.M."/>
            <person name="Eger P."/>
            <person name="Zimmermann W."/>
            <person name="Wedler H."/>
            <person name="Wambutt R."/>
            <person name="Purnelle B."/>
            <person name="Goffeau A."/>
            <person name="Cadieu E."/>
            <person name="Dreano S."/>
            <person name="Gloux S."/>
            <person name="Lelaure V."/>
            <person name="Mottier S."/>
            <person name="Galibert F."/>
            <person name="Aves S.J."/>
            <person name="Xiang Z."/>
            <person name="Hunt C."/>
            <person name="Moore K."/>
            <person name="Hurst S.M."/>
            <person name="Lucas M."/>
            <person name="Rochet M."/>
            <person name="Gaillardin C."/>
            <person name="Tallada V.A."/>
            <person name="Garzon A."/>
            <person name="Thode G."/>
            <person name="Daga R.R."/>
            <person name="Cruzado L."/>
            <person name="Jimenez J."/>
            <person name="Sanchez M."/>
            <person name="del Rey F."/>
            <person name="Benito J."/>
            <person name="Dominguez A."/>
            <person name="Revuelta J.L."/>
            <person name="Moreno S."/>
            <person name="Armstrong J."/>
            <person name="Forsburg S.L."/>
            <person name="Cerutti L."/>
            <person name="Lowe T."/>
            <person name="McCombie W.R."/>
            <person name="Paulsen I."/>
            <person name="Potashkin J."/>
            <person name="Shpakovski G.V."/>
            <person name="Ussery D."/>
            <person name="Barrell B.G."/>
            <person name="Nurse P."/>
        </authorList>
    </citation>
    <scope>NUCLEOTIDE SEQUENCE [LARGE SCALE GENOMIC DNA]</scope>
    <source>
        <strain>972 / ATCC 24843</strain>
    </source>
</reference>
<reference key="2">
    <citation type="journal article" date="2000" name="Hum. Mol. Genet.">
        <title>Characterization of the Schizosaccharomyces pombe orthologue of the human survival motor neuron (SMN) protein.</title>
        <authorList>
            <person name="Owen N."/>
            <person name="Doe C.L."/>
            <person name="Mellor J."/>
            <person name="Davies K.E."/>
        </authorList>
    </citation>
    <scope>IDENTIFICATION</scope>
    <scope>FUNCTION</scope>
    <scope>INTERACTION WITH YIP1</scope>
    <scope>SUBCELLULAR LOCATION</scope>
    <scope>MUTAGENESIS OF TYR-136 AND GLY-143</scope>
    <source>
        <strain>972 / ATCC 24843</strain>
    </source>
</reference>
<reference key="3">
    <citation type="journal article" date="2000" name="J. Biol. Chem.">
        <title>The survival motor neuron protein of Schizosaccharomyces pombe. Conservation of survival motor neuron interaction domains in divergent organisms.</title>
        <authorList>
            <person name="Paushkin S."/>
            <person name="Charroux B."/>
            <person name="Abel L."/>
            <person name="Perkinson R.A."/>
            <person name="Pellizzoni L."/>
            <person name="Dreyfuss G."/>
        </authorList>
    </citation>
    <scope>SUBUNIT</scope>
    <scope>SUBCELLULAR LOCATION</scope>
</reference>
<reference key="4">
    <citation type="journal article" date="2010" name="EMBO J.">
        <title>Specific splicing defects in S. pombe carrying a degron allele of the Survival of Motor Neuron gene.</title>
        <authorList>
            <person name="Campion Y."/>
            <person name="Neel H."/>
            <person name="Gostan T."/>
            <person name="Soret J."/>
            <person name="Bordonne R."/>
        </authorList>
    </citation>
    <scope>FUNCTION</scope>
    <scope>DISRUPTION PHENOTYPE</scope>
</reference>
<reference evidence="12" key="5">
    <citation type="journal article" date="2015" name="J. Biol. Chem.">
        <title>Oligomeric Properties of Survival Motor Neuron.Gemin2 Complexes.</title>
        <authorList>
            <person name="Gupta K."/>
            <person name="Martin R."/>
            <person name="Sharp R."/>
            <person name="Sarachan K.L."/>
            <person name="Ninan N.S."/>
            <person name="Van Duyne G.D."/>
        </authorList>
    </citation>
    <scope>X-RAY CRYSTALLOGRAPHY (1.70 ANGSTROMS) OF 119-150</scope>
    <scope>SUBUNIT</scope>
    <scope>INTERACTION WITH YIP11</scope>
</reference>
<reference evidence="13" key="6">
    <citation type="journal article" date="2021" name="Nucleic Acids Res.">
        <title>Identification and structural analysis of the Schizosaccharomyces pombe SMN complex.</title>
        <authorList>
            <person name="Veepaschit J."/>
            <person name="Viswanathan A."/>
            <person name="Bordonne R."/>
            <person name="Grimm C."/>
            <person name="Fischer U."/>
        </authorList>
    </citation>
    <scope>X-RAY CRYSTALLOGRAPHY (2.16 ANGSTROMS) OF 10-35 AND 120-147</scope>
    <scope>FUNCTION</scope>
    <scope>SUBUNIT</scope>
    <scope>IDENTIFICATION IN THE CORE SMN COMPLEX</scope>
    <scope>INTERACTION WITH YIP11 AND GEM8</scope>
    <scope>MUTAGENESIS OF SER-130 AND ALA-134</scope>
</reference>
<feature type="chain" id="PRO_0000218907" description="SMN complex subunit smn1">
    <location>
        <begin position="1"/>
        <end position="152"/>
    </location>
</feature>
<feature type="region of interest" description="Interacts with yip11/gem2" evidence="10">
    <location>
        <begin position="26"/>
        <end position="51"/>
    </location>
</feature>
<feature type="region of interest" description="Disordered" evidence="2">
    <location>
        <begin position="88"/>
        <end position="110"/>
    </location>
</feature>
<feature type="region of interest" description="May interact with gem8" evidence="7">
    <location>
        <begin position="130"/>
        <end position="152"/>
    </location>
</feature>
<feature type="compositionally biased region" description="Basic and acidic residues" evidence="2">
    <location>
        <begin position="91"/>
        <end position="108"/>
    </location>
</feature>
<feature type="mutagenesis site" description="Abolishes homooligomerization beyond homodimer formation and results in abnormal SMN complex formation. Decreases vegetative cell population growth." evidence="7">
    <original>S</original>
    <variation>D</variation>
    <location>
        <position position="130"/>
    </location>
</feature>
<feature type="mutagenesis site" description="Abolishes homooligomerization beyond homodimer formation and results in abnormal SMN complex formation. Decreases vegetative cell population growth." evidence="7">
    <original>A</original>
    <variation>E</variation>
    <location>
        <position position="134"/>
    </location>
</feature>
<feature type="mutagenesis site" description="Localizes in the cytoplasm." evidence="3">
    <original>Y</original>
    <variation>C</variation>
    <location>
        <position position="136"/>
    </location>
</feature>
<feature type="mutagenesis site" description="Localizes in the cytoplasm." evidence="3">
    <original>G</original>
    <variation>V</variation>
    <location>
        <position position="143"/>
    </location>
</feature>
<feature type="helix" evidence="15">
    <location>
        <begin position="11"/>
        <end position="35"/>
    </location>
</feature>
<feature type="helix" evidence="14">
    <location>
        <begin position="122"/>
        <end position="124"/>
    </location>
</feature>
<feature type="helix" evidence="14">
    <location>
        <begin position="125"/>
        <end position="149"/>
    </location>
</feature>
<keyword id="KW-0002">3D-structure</keyword>
<keyword id="KW-0507">mRNA processing</keyword>
<keyword id="KW-0508">mRNA splicing</keyword>
<keyword id="KW-0539">Nucleus</keyword>
<keyword id="KW-1185">Reference proteome</keyword>
<keyword id="KW-0694">RNA-binding</keyword>
<protein>
    <recommendedName>
        <fullName evidence="11">SMN complex subunit smn1</fullName>
    </recommendedName>
    <alternativeName>
        <fullName evidence="9">Gemin-1</fullName>
    </alternativeName>
    <alternativeName>
        <fullName evidence="9">Survival motor neuron protein</fullName>
    </alternativeName>
</protein>
<evidence type="ECO:0000250" key="1">
    <source>
        <dbReference type="UniProtKB" id="Q16637"/>
    </source>
</evidence>
<evidence type="ECO:0000256" key="2">
    <source>
        <dbReference type="SAM" id="MobiDB-lite"/>
    </source>
</evidence>
<evidence type="ECO:0000269" key="3">
    <source>
    </source>
</evidence>
<evidence type="ECO:0000269" key="4">
    <source>
    </source>
</evidence>
<evidence type="ECO:0000269" key="5">
    <source>
    </source>
</evidence>
<evidence type="ECO:0000269" key="6">
    <source>
    </source>
</evidence>
<evidence type="ECO:0000269" key="7">
    <source>
    </source>
</evidence>
<evidence type="ECO:0000303" key="8">
    <source>
    </source>
</evidence>
<evidence type="ECO:0000305" key="9"/>
<evidence type="ECO:0000305" key="10">
    <source>
    </source>
</evidence>
<evidence type="ECO:0000312" key="11">
    <source>
        <dbReference type="PomBase" id="SPAC2G11.08c"/>
    </source>
</evidence>
<evidence type="ECO:0007744" key="12">
    <source>
        <dbReference type="PDB" id="4RG5"/>
    </source>
</evidence>
<evidence type="ECO:0007744" key="13">
    <source>
        <dbReference type="PDB" id="7BB3"/>
    </source>
</evidence>
<evidence type="ECO:0007829" key="14">
    <source>
        <dbReference type="PDB" id="4RG5"/>
    </source>
</evidence>
<evidence type="ECO:0007829" key="15">
    <source>
        <dbReference type="PDB" id="7BB3"/>
    </source>
</evidence>
<organism>
    <name type="scientific">Schizosaccharomyces pombe (strain 972 / ATCC 24843)</name>
    <name type="common">Fission yeast</name>
    <dbReference type="NCBI Taxonomy" id="284812"/>
    <lineage>
        <taxon>Eukaryota</taxon>
        <taxon>Fungi</taxon>
        <taxon>Dikarya</taxon>
        <taxon>Ascomycota</taxon>
        <taxon>Taphrinomycotina</taxon>
        <taxon>Schizosaccharomycetes</taxon>
        <taxon>Schizosaccharomycetales</taxon>
        <taxon>Schizosaccharomycetaceae</taxon>
        <taxon>Schizosaccharomyces</taxon>
    </lineage>
</organism>
<gene>
    <name evidence="8" type="primary">smn1</name>
    <name evidence="8" type="synonym">yab8</name>
    <name evidence="11" type="ORF">SPAC2G11.08c</name>
</gene>
<name>SMN_SCHPO</name>
<accession>Q09808</accession>
<sequence>MDQSQKEVWDDSELRNAFETALHEFKKYHSIEAKGGVSDPDSRLDGEKLISAARTEESISKLEEGEQMINQQTETTLEGDTHIQQFADNKGLSDEKPETRAAETHQEFMEVPPPIRGLTYDETYKKLIMSWYYAGYYTGLAEGLAKSEQRKD</sequence>
<comment type="function">
    <text evidence="1 3 5 7">The SMN complex catalyzes the assembly of small nuclear ribonucleoproteins (snRNPs), the building blocks of the spliceosome, and thereby plays an important role in the splicing of cellular pre-mRNAs (PubMed:10749974, PubMed:20400941, PubMed:33754639). Most spliceosomal snRNPs contain a common set of Sm proteins smb1, smd1, smd2, smd3, sme1, smf1 and smg1 that assemble in a heptameric protein ring on the Sm site of the small nuclear RNA to form the core snRNP (Sm core) (By similarity). In the cytosol, the Sm proteins smd1, smd2, sme1, smf1 and smg1 (5Sm) are trapped in an inactive 6S pICln-Sm complex by the chaperone saf5 that controls the assembly of the core snRNP (By similarity). To assemble core snRNPs, the SMN complex accepts the trapped 5Sm proteins from saf5 forming an intermediate (By similarity). Binding of snRNA inside 5Sm triggers eviction of the SMN complex, thereby allowing binding of smd3 and smb1 to complete assembly of the core snRNP (By similarity). Within the SMN complex, smn1 acts as a structural backbone and together with yip11/gem2 it gathers the Sm complex subunits (PubMed:33754639).</text>
</comment>
<comment type="subunit">
    <text evidence="3 4 6 7">Homooligomer; may form homodimers and homotetramers (PubMed:26092730, PubMed:33754639). Part of the core SMN complex at least composed of smn1, yip11/gem2, gem6, gem7 and gem8 (PubMed:33754639). Part of the SMN-Sm complex (PubMed:10816558). Interacts with yip11/gem2; the interaction is direct (PubMed:10749974, PubMed:26092730, PubMed:33754639). Interacts with gem8; the interaction is direct (PubMed:33754639). Interacts with proteins of the Sm complex, including smn1, smb1, smd1, smd2 and smd3 (PubMed:10816558).</text>
</comment>
<comment type="subcellular location">
    <subcellularLocation>
        <location evidence="3 4">Nucleus</location>
    </subcellularLocation>
</comment>
<comment type="disruption phenotype">
    <text evidence="5">Degron-mediated knockdown leads to decreased cellular levels of Sm-class snRNPs, abnormal splicing of a subset of introns, and cell population growth defects.</text>
</comment>
<comment type="similarity">
    <text evidence="9">Belongs to the SMN family.</text>
</comment>